<evidence type="ECO:0000255" key="1">
    <source>
        <dbReference type="HAMAP-Rule" id="MF_01014"/>
    </source>
</evidence>
<reference key="1">
    <citation type="journal article" date="2008" name="Genome Res.">
        <title>The genome of Pelotomaculum thermopropionicum reveals niche-associated evolution in anaerobic microbiota.</title>
        <authorList>
            <person name="Kosaka T."/>
            <person name="Kato S."/>
            <person name="Shimoyama T."/>
            <person name="Ishii S."/>
            <person name="Abe T."/>
            <person name="Watanabe K."/>
        </authorList>
    </citation>
    <scope>NUCLEOTIDE SEQUENCE [LARGE SCALE GENOMIC DNA]</scope>
    <source>
        <strain>DSM 13744 / JCM 10971 / SI</strain>
    </source>
</reference>
<name>HIS4_PELTS</name>
<organism>
    <name type="scientific">Pelotomaculum thermopropionicum (strain DSM 13744 / JCM 10971 / SI)</name>
    <dbReference type="NCBI Taxonomy" id="370438"/>
    <lineage>
        <taxon>Bacteria</taxon>
        <taxon>Bacillati</taxon>
        <taxon>Bacillota</taxon>
        <taxon>Clostridia</taxon>
        <taxon>Eubacteriales</taxon>
        <taxon>Desulfotomaculaceae</taxon>
        <taxon>Pelotomaculum</taxon>
    </lineage>
</organism>
<sequence>MLIIPAIDLREGNCVRLVEGRLDRETVYSGDPVAVAGMWQSQGARMLHVVDLDGAFSGAPKNLDVIGEILSAVSIPVQVGGGIRSMEAVERLLELGAARVILGTAAILKPQLVAEACARYGEAVLVGIDGRNGRVAIEGWGVTVDKGTVELALEMKRLGIKRAVFTDIRRDGTLRGPNLEAIREFAAATGLKVIASGGVSNAEDLRALKKLEPLGVEAVIMGKALYAGTVKMSEALAIASGEEAEEGACCKKESSPAWT</sequence>
<keyword id="KW-0028">Amino-acid biosynthesis</keyword>
<keyword id="KW-0963">Cytoplasm</keyword>
<keyword id="KW-0368">Histidine biosynthesis</keyword>
<keyword id="KW-0413">Isomerase</keyword>
<keyword id="KW-1185">Reference proteome</keyword>
<dbReference type="EC" id="5.3.1.16" evidence="1"/>
<dbReference type="EMBL" id="AP009389">
    <property type="protein sequence ID" value="BAF60714.1"/>
    <property type="molecule type" value="Genomic_DNA"/>
</dbReference>
<dbReference type="SMR" id="A5CZ74"/>
<dbReference type="STRING" id="370438.PTH_2533"/>
<dbReference type="KEGG" id="pth:PTH_2533"/>
<dbReference type="eggNOG" id="COG0106">
    <property type="taxonomic scope" value="Bacteria"/>
</dbReference>
<dbReference type="HOGENOM" id="CLU_048577_1_1_9"/>
<dbReference type="UniPathway" id="UPA00031">
    <property type="reaction ID" value="UER00009"/>
</dbReference>
<dbReference type="Proteomes" id="UP000006556">
    <property type="component" value="Chromosome"/>
</dbReference>
<dbReference type="GO" id="GO:0005737">
    <property type="term" value="C:cytoplasm"/>
    <property type="evidence" value="ECO:0007669"/>
    <property type="project" value="UniProtKB-SubCell"/>
</dbReference>
<dbReference type="GO" id="GO:0003949">
    <property type="term" value="F:1-(5-phosphoribosyl)-5-[(5-phosphoribosylamino)methylideneamino]imidazole-4-carboxamide isomerase activity"/>
    <property type="evidence" value="ECO:0007669"/>
    <property type="project" value="UniProtKB-UniRule"/>
</dbReference>
<dbReference type="GO" id="GO:0000105">
    <property type="term" value="P:L-histidine biosynthetic process"/>
    <property type="evidence" value="ECO:0007669"/>
    <property type="project" value="UniProtKB-UniRule"/>
</dbReference>
<dbReference type="GO" id="GO:0000162">
    <property type="term" value="P:L-tryptophan biosynthetic process"/>
    <property type="evidence" value="ECO:0007669"/>
    <property type="project" value="TreeGrafter"/>
</dbReference>
<dbReference type="CDD" id="cd04732">
    <property type="entry name" value="HisA"/>
    <property type="match status" value="1"/>
</dbReference>
<dbReference type="FunFam" id="3.20.20.70:FF:000009">
    <property type="entry name" value="1-(5-phosphoribosyl)-5-[(5-phosphoribosylamino)methylideneamino] imidazole-4-carboxamide isomerase"/>
    <property type="match status" value="1"/>
</dbReference>
<dbReference type="Gene3D" id="3.20.20.70">
    <property type="entry name" value="Aldolase class I"/>
    <property type="match status" value="1"/>
</dbReference>
<dbReference type="HAMAP" id="MF_01014">
    <property type="entry name" value="HisA"/>
    <property type="match status" value="1"/>
</dbReference>
<dbReference type="InterPro" id="IPR013785">
    <property type="entry name" value="Aldolase_TIM"/>
</dbReference>
<dbReference type="InterPro" id="IPR006062">
    <property type="entry name" value="His_biosynth"/>
</dbReference>
<dbReference type="InterPro" id="IPR006063">
    <property type="entry name" value="HisA_bact_arch"/>
</dbReference>
<dbReference type="InterPro" id="IPR044524">
    <property type="entry name" value="Isoase_HisA-like"/>
</dbReference>
<dbReference type="InterPro" id="IPR023016">
    <property type="entry name" value="Isoase_HisA-like_bact"/>
</dbReference>
<dbReference type="InterPro" id="IPR011060">
    <property type="entry name" value="RibuloseP-bd_barrel"/>
</dbReference>
<dbReference type="NCBIfam" id="TIGR00007">
    <property type="entry name" value="1-(5-phosphoribosyl)-5-[(5-phosphoribosylamino)methylideneamino]imidazole-4-carboxamide isomerase"/>
    <property type="match status" value="1"/>
</dbReference>
<dbReference type="PANTHER" id="PTHR43090">
    <property type="entry name" value="1-(5-PHOSPHORIBOSYL)-5-[(5-PHOSPHORIBOSYLAMINO)METHYLIDENEAMINO] IMIDAZOLE-4-CARBOXAMIDE ISOMERASE"/>
    <property type="match status" value="1"/>
</dbReference>
<dbReference type="PANTHER" id="PTHR43090:SF2">
    <property type="entry name" value="1-(5-PHOSPHORIBOSYL)-5-[(5-PHOSPHORIBOSYLAMINO)METHYLIDENEAMINO] IMIDAZOLE-4-CARBOXAMIDE ISOMERASE"/>
    <property type="match status" value="1"/>
</dbReference>
<dbReference type="Pfam" id="PF00977">
    <property type="entry name" value="His_biosynth"/>
    <property type="match status" value="1"/>
</dbReference>
<dbReference type="SUPFAM" id="SSF51366">
    <property type="entry name" value="Ribulose-phoshate binding barrel"/>
    <property type="match status" value="1"/>
</dbReference>
<gene>
    <name evidence="1" type="primary">hisA</name>
    <name type="ordered locus">PTH_2533</name>
</gene>
<feature type="chain" id="PRO_1000084102" description="1-(5-phosphoribosyl)-5-[(5-phosphoribosylamino)methylideneamino] imidazole-4-carboxamide isomerase">
    <location>
        <begin position="1"/>
        <end position="259"/>
    </location>
</feature>
<feature type="active site" description="Proton acceptor" evidence="1">
    <location>
        <position position="8"/>
    </location>
</feature>
<feature type="active site" description="Proton donor" evidence="1">
    <location>
        <position position="129"/>
    </location>
</feature>
<comment type="catalytic activity">
    <reaction evidence="1">
        <text>1-(5-phospho-beta-D-ribosyl)-5-[(5-phospho-beta-D-ribosylamino)methylideneamino]imidazole-4-carboxamide = 5-[(5-phospho-1-deoxy-D-ribulos-1-ylimino)methylamino]-1-(5-phospho-beta-D-ribosyl)imidazole-4-carboxamide</text>
        <dbReference type="Rhea" id="RHEA:15469"/>
        <dbReference type="ChEBI" id="CHEBI:58435"/>
        <dbReference type="ChEBI" id="CHEBI:58525"/>
        <dbReference type="EC" id="5.3.1.16"/>
    </reaction>
</comment>
<comment type="pathway">
    <text evidence="1">Amino-acid biosynthesis; L-histidine biosynthesis; L-histidine from 5-phospho-alpha-D-ribose 1-diphosphate: step 4/9.</text>
</comment>
<comment type="subcellular location">
    <subcellularLocation>
        <location evidence="1">Cytoplasm</location>
    </subcellularLocation>
</comment>
<comment type="similarity">
    <text evidence="1">Belongs to the HisA/HisF family.</text>
</comment>
<accession>A5CZ74</accession>
<proteinExistence type="inferred from homology"/>
<protein>
    <recommendedName>
        <fullName evidence="1">1-(5-phosphoribosyl)-5-[(5-phosphoribosylamino)methylideneamino] imidazole-4-carboxamide isomerase</fullName>
        <ecNumber evidence="1">5.3.1.16</ecNumber>
    </recommendedName>
    <alternativeName>
        <fullName evidence="1">Phosphoribosylformimino-5-aminoimidazole carboxamide ribotide isomerase</fullName>
    </alternativeName>
</protein>